<evidence type="ECO:0000255" key="1">
    <source>
        <dbReference type="PROSITE-ProRule" id="PRU01083"/>
    </source>
</evidence>
<evidence type="ECO:0000269" key="2">
    <source>
    </source>
</evidence>
<evidence type="ECO:0000269" key="3">
    <source>
    </source>
</evidence>
<evidence type="ECO:0000269" key="4">
    <source>
    </source>
</evidence>
<evidence type="ECO:0000269" key="5">
    <source>
    </source>
</evidence>
<evidence type="ECO:0000269" key="6">
    <source>
    </source>
</evidence>
<evidence type="ECO:0000269" key="7">
    <source>
    </source>
</evidence>
<evidence type="ECO:0000269" key="8">
    <source>
    </source>
</evidence>
<evidence type="ECO:0000269" key="9">
    <source>
    </source>
</evidence>
<evidence type="ECO:0000269" key="10">
    <source>
    </source>
</evidence>
<evidence type="ECO:0000269" key="11">
    <source>
    </source>
</evidence>
<evidence type="ECO:0000269" key="12">
    <source>
    </source>
</evidence>
<evidence type="ECO:0000269" key="13">
    <source>
    </source>
</evidence>
<evidence type="ECO:0000269" key="14">
    <source>
    </source>
</evidence>
<evidence type="ECO:0000269" key="15">
    <source>
    </source>
</evidence>
<evidence type="ECO:0000269" key="16">
    <source>
    </source>
</evidence>
<evidence type="ECO:0000269" key="17">
    <source>
    </source>
</evidence>
<evidence type="ECO:0000269" key="18">
    <source>
    </source>
</evidence>
<evidence type="ECO:0000269" key="19">
    <source>
    </source>
</evidence>
<evidence type="ECO:0000269" key="20">
    <source>
    </source>
</evidence>
<evidence type="ECO:0000269" key="21">
    <source>
    </source>
</evidence>
<evidence type="ECO:0000269" key="22">
    <source>
    </source>
</evidence>
<evidence type="ECO:0000269" key="23">
    <source>
    </source>
</evidence>
<evidence type="ECO:0000269" key="24">
    <source>
    </source>
</evidence>
<evidence type="ECO:0000269" key="25">
    <source>
    </source>
</evidence>
<evidence type="ECO:0000269" key="26">
    <source>
    </source>
</evidence>
<evidence type="ECO:0000269" key="27">
    <source ref="2"/>
</evidence>
<evidence type="ECO:0000303" key="28">
    <source>
    </source>
</evidence>
<evidence type="ECO:0000303" key="29">
    <source>
    </source>
</evidence>
<evidence type="ECO:0000303" key="30">
    <source>
    </source>
</evidence>
<evidence type="ECO:0000303" key="31">
    <source>
    </source>
</evidence>
<evidence type="ECO:0000305" key="32"/>
<evidence type="ECO:0000305" key="33">
    <source>
    </source>
</evidence>
<evidence type="ECO:0000312" key="34">
    <source>
        <dbReference type="HGNC" id="HGNC:17356"/>
    </source>
</evidence>
<evidence type="ECO:0007744" key="35">
    <source>
        <dbReference type="PDB" id="5HX4"/>
    </source>
</evidence>
<evidence type="ECO:0007744" key="36">
    <source>
        <dbReference type="PDB" id="5HX5"/>
    </source>
</evidence>
<evidence type="ECO:0007744" key="37">
    <source>
        <dbReference type="PDB" id="6NIL"/>
    </source>
</evidence>
<evidence type="ECO:0007829" key="38">
    <source>
        <dbReference type="PDB" id="5HX4"/>
    </source>
</evidence>
<evidence type="ECO:0007829" key="39">
    <source>
        <dbReference type="PDB" id="5ZVB"/>
    </source>
</evidence>
<accession>Q8IUX4</accession>
<accession>B0QYD4</accession>
<accession>Q45F03</accession>
<accession>Q6ICH3</accession>
<accession>Q7Z2N2</accession>
<accession>Q7Z2N5</accession>
<protein>
    <recommendedName>
        <fullName evidence="32">DNA dC-&gt;dU-editing enzyme APOBEC-3F</fullName>
        <ecNumber evidence="10">3.5.4.38</ecNumber>
    </recommendedName>
    <alternativeName>
        <fullName>Apolipoprotein B mRNA-editing enzyme catalytic polypeptide-like 3F</fullName>
        <shortName evidence="31">A3F</shortName>
    </alternativeName>
</protein>
<proteinExistence type="evidence at protein level"/>
<comment type="function">
    <text evidence="3 4 6 7 11 12 13 15 16 17 19 20 21 22 23 26">DNA deaminase (cytidine deaminase) which acts as an inhibitor of retrovirus replication and retrotransposon mobility via deaminase-dependent and -independent mechanisms (PubMed:15141007, PubMed:20062055, PubMed:22915799, PubMed:34774569). Exhibits antiviral activity against viruse such as HIV-1 or HIV-2 (PubMed:15141007, PubMed:15152192, PubMed:20219927, PubMed:21835787, PubMed:22807680, PubMed:23001005, PubMed:23097438, PubMed:23152537, PubMed:34774569). After the penetration of retroviral nucleocapsids into target cells of infection and the initiation of reverse transcription, it can induce the conversion of cytosine to uracil in the minus-sense single-strand viral DNA, leading to G-to-A hypermutations in the subsequent plus-strand viral DNA (PubMed:15141007). The resultant detrimental levels of mutations in the proviral genome, along with a deamination-independent mechanism that works prior to the proviral integration, together exert efficient antiretroviral effects in infected target cells (PubMed:15141007). Selectively targets single-stranded DNA and does not deaminate double-stranded DNA or single- or double-stranded RNA (PubMed:15141007). Exhibits antiviral activity also against hepatitis B virus (HBV), equine infectious anemia virus (EIAV), xenotropic MuLV-related virus (XMRV) and simian foamy virus (SFV) and may inhibit the mobility of LTR and non-LTR retrotransposons (PubMed:16378963, PubMed:16527742, PubMed:19458006, PubMed:20062055, PubMed:20335265). May also play a role in the epigenetic regulation of gene expression through the process of active DNA demethylation (PubMed:21496894).</text>
</comment>
<comment type="catalytic activity">
    <reaction>
        <text>a 2'-deoxycytidine in single-stranded DNA + H2O + H(+) = a 2'-deoxyuridine in single-stranded DNA + NH4(+)</text>
        <dbReference type="Rhea" id="RHEA:50948"/>
        <dbReference type="Rhea" id="RHEA-COMP:12846"/>
        <dbReference type="Rhea" id="RHEA-COMP:12847"/>
        <dbReference type="ChEBI" id="CHEBI:15377"/>
        <dbReference type="ChEBI" id="CHEBI:15378"/>
        <dbReference type="ChEBI" id="CHEBI:28938"/>
        <dbReference type="ChEBI" id="CHEBI:85452"/>
        <dbReference type="ChEBI" id="CHEBI:133902"/>
        <dbReference type="EC" id="3.5.4.38"/>
    </reaction>
</comment>
<comment type="cofactor">
    <cofactor evidence="24 25">
        <name>Zn(2+)</name>
        <dbReference type="ChEBI" id="CHEBI:29105"/>
    </cofactor>
</comment>
<comment type="activity regulation">
    <text evidence="17 18 25">(Microbial infection) Antiviral activity is neutralized by the HIV-1 virion infectivity factor (Vif), that prevents its incorporation into progeny virions by both inhibiting its translation and/or by inducing its ubiquitination and subsequent degradation by the 26S proteasome.</text>
</comment>
<comment type="subunit">
    <text evidence="8 20 24 25">Homodimer (PubMed:27139641). Interacts with APOBEC3G in an RNA-dependent manner (PubMed:16699599, PubMed:31792451). Interacts with AGO1, AGO2 and AGO3 (PubMed:22915799).</text>
</comment>
<comment type="subunit">
    <text evidence="4 17 18 21 25">(Microbial infection) Interacts with HIV-1 Vif, leading to its ubiquitination and degradation by the proteasome (PubMed:15152192, PubMed:22190037, PubMed:23001005, PubMed:31792451). In the absence of Vif protein, specifically packaged into HIV-1 virions (PubMed:15152192).</text>
</comment>
<comment type="interaction">
    <interactant intactId="EBI-11306991">
        <id>Q8IUX4</id>
    </interactant>
    <interactant intactId="EBI-11306991">
        <id>Q8IUX4</id>
        <label>APOBEC3F</label>
    </interactant>
    <organismsDiffer>false</organismsDiffer>
    <experiments>2</experiments>
</comment>
<comment type="subcellular location">
    <subcellularLocation>
        <location evidence="7 8 17">Cytoplasm</location>
    </subcellularLocation>
    <subcellularLocation>
        <location evidence="8 20">Cytoplasm</location>
        <location evidence="8 20">P-body</location>
    </subcellularLocation>
</comment>
<comment type="alternative products">
    <event type="alternative splicing"/>
    <isoform>
        <id>Q8IUX4-1</id>
        <name>1</name>
        <sequence type="displayed"/>
    </isoform>
    <isoform>
        <id>Q8IUX4-2</id>
        <name>2</name>
        <sequence type="described" ref="VSP_009803 VSP_009804"/>
    </isoform>
    <isoform>
        <id>Q8IUX4-3</id>
        <name>3</name>
        <sequence type="described" ref="VSP_042754 VSP_042755"/>
    </isoform>
</comment>
<comment type="tissue specificity">
    <text evidence="2 4 14">Widely expressed. Highly expressed in ovary.</text>
</comment>
<comment type="domain">
    <text evidence="9">The CMP/dCMP deaminase domain 1 mediates RNA binding, RNA-dependent oligomerization and virion incorporation whereas the CMP/dCMP deaminase domain 2 confers deoxycytidine deaminase activity and substrate sequence specificity.</text>
</comment>
<comment type="PTM">
    <text evidence="18 25">(Microbial infection) Following infection by HIV-1, ubiquitinated by a cullin-5-RING E3 ubiquitin-protein ligase complex (ECS complex) hijacked by the HIV-1 Vif protein, leading to its degradation.</text>
</comment>
<comment type="miscellaneous">
    <text evidence="2">It is one of seven related genes or pseudogenes found in a cluster, thought to result from gene duplication, on chromosome 22.</text>
</comment>
<comment type="miscellaneous">
    <molecule>Isoform 2</molecule>
    <text evidence="32">May be due to a competing donor splice site.</text>
</comment>
<comment type="similarity">
    <text evidence="32">Belongs to the cytidine and deoxycytidylate deaminase family.</text>
</comment>
<organism>
    <name type="scientific">Homo sapiens</name>
    <name type="common">Human</name>
    <dbReference type="NCBI Taxonomy" id="9606"/>
    <lineage>
        <taxon>Eukaryota</taxon>
        <taxon>Metazoa</taxon>
        <taxon>Chordata</taxon>
        <taxon>Craniata</taxon>
        <taxon>Vertebrata</taxon>
        <taxon>Euteleostomi</taxon>
        <taxon>Mammalia</taxon>
        <taxon>Eutheria</taxon>
        <taxon>Euarchontoglires</taxon>
        <taxon>Primates</taxon>
        <taxon>Haplorrhini</taxon>
        <taxon>Catarrhini</taxon>
        <taxon>Hominidae</taxon>
        <taxon>Homo</taxon>
    </lineage>
</organism>
<dbReference type="EC" id="3.5.4.38" evidence="10"/>
<dbReference type="EMBL" id="CR456395">
    <property type="protein sequence ID" value="CAG30281.1"/>
    <property type="molecule type" value="mRNA"/>
</dbReference>
<dbReference type="EMBL" id="DQ146365">
    <property type="protein sequence ID" value="AAZ38720.1"/>
    <property type="molecule type" value="Genomic_DNA"/>
</dbReference>
<dbReference type="EMBL" id="AL022318">
    <property type="status" value="NOT_ANNOTATED_CDS"/>
    <property type="molecule type" value="Genomic_DNA"/>
</dbReference>
<dbReference type="EMBL" id="CH471095">
    <property type="protein sequence ID" value="EAW60288.1"/>
    <property type="molecule type" value="Genomic_DNA"/>
</dbReference>
<dbReference type="EMBL" id="CH471095">
    <property type="protein sequence ID" value="EAW60289.1"/>
    <property type="molecule type" value="Genomic_DNA"/>
</dbReference>
<dbReference type="EMBL" id="BC038808">
    <property type="protein sequence ID" value="AAH38808.1"/>
    <property type="molecule type" value="mRNA"/>
</dbReference>
<dbReference type="EMBL" id="BC061914">
    <property type="protein sequence ID" value="AAH61914.1"/>
    <property type="molecule type" value="mRNA"/>
</dbReference>
<dbReference type="CCDS" id="CCDS33648.1">
    <molecule id="Q8IUX4-1"/>
</dbReference>
<dbReference type="CCDS" id="CCDS33649.1">
    <molecule id="Q8IUX4-3"/>
</dbReference>
<dbReference type="RefSeq" id="NP_001006667.1">
    <molecule id="Q8IUX4-3"/>
    <property type="nucleotide sequence ID" value="NM_001006666.2"/>
</dbReference>
<dbReference type="RefSeq" id="NP_660341.2">
    <molecule id="Q8IUX4-1"/>
    <property type="nucleotide sequence ID" value="NM_145298.5"/>
</dbReference>
<dbReference type="RefSeq" id="XP_016884132.1">
    <property type="nucleotide sequence ID" value="XM_017028643.1"/>
</dbReference>
<dbReference type="PDB" id="3WUS">
    <property type="method" value="X-ray"/>
    <property type="resolution" value="2.54 A"/>
    <property type="chains" value="A/B=187-373"/>
</dbReference>
<dbReference type="PDB" id="4IOU">
    <property type="method" value="X-ray"/>
    <property type="resolution" value="2.75 A"/>
    <property type="chains" value="A/B/C/D=185-373"/>
</dbReference>
<dbReference type="PDB" id="4J4J">
    <property type="method" value="X-ray"/>
    <property type="resolution" value="3.10 A"/>
    <property type="chains" value="A/B=218-373"/>
</dbReference>
<dbReference type="PDB" id="5HX4">
    <property type="method" value="X-ray"/>
    <property type="resolution" value="1.92 A"/>
    <property type="chains" value="A/B=185-373"/>
</dbReference>
<dbReference type="PDB" id="5HX5">
    <property type="method" value="X-ray"/>
    <property type="resolution" value="2.33 A"/>
    <property type="chains" value="A/B=185-373"/>
</dbReference>
<dbReference type="PDB" id="5W2M">
    <property type="method" value="X-ray"/>
    <property type="resolution" value="3.70 A"/>
    <property type="chains" value="A/B/C/D/J/K/L/M=190-373"/>
</dbReference>
<dbReference type="PDB" id="5ZVA">
    <property type="method" value="X-ray"/>
    <property type="resolution" value="2.30 A"/>
    <property type="chains" value="A/B=220-373"/>
</dbReference>
<dbReference type="PDB" id="5ZVB">
    <property type="method" value="X-ray"/>
    <property type="resolution" value="2.00 A"/>
    <property type="chains" value="A/B=220-373"/>
</dbReference>
<dbReference type="PDB" id="6NIL">
    <property type="method" value="EM"/>
    <property type="resolution" value="3.90 A"/>
    <property type="chains" value="A/D/G/J=185-373"/>
</dbReference>
<dbReference type="PDBsum" id="3WUS"/>
<dbReference type="PDBsum" id="4IOU"/>
<dbReference type="PDBsum" id="4J4J"/>
<dbReference type="PDBsum" id="5HX4"/>
<dbReference type="PDBsum" id="5HX5"/>
<dbReference type="PDBsum" id="5W2M"/>
<dbReference type="PDBsum" id="5ZVA"/>
<dbReference type="PDBsum" id="5ZVB"/>
<dbReference type="PDBsum" id="6NIL"/>
<dbReference type="EMDB" id="EMD-9380"/>
<dbReference type="EMDB" id="EMD-9381"/>
<dbReference type="SMR" id="Q8IUX4"/>
<dbReference type="BioGRID" id="128319">
    <property type="interactions" value="151"/>
</dbReference>
<dbReference type="DIP" id="DIP-59966N"/>
<dbReference type="FunCoup" id="Q8IUX4">
    <property type="interactions" value="292"/>
</dbReference>
<dbReference type="IntAct" id="Q8IUX4">
    <property type="interactions" value="61"/>
</dbReference>
<dbReference type="STRING" id="9606.ENSP00000309749"/>
<dbReference type="ChEMBL" id="CHEMBL2007626"/>
<dbReference type="iPTMnet" id="Q8IUX4"/>
<dbReference type="PhosphoSitePlus" id="Q8IUX4"/>
<dbReference type="BioMuta" id="APOBEC3F"/>
<dbReference type="DMDM" id="161784334"/>
<dbReference type="jPOST" id="Q8IUX4"/>
<dbReference type="MassIVE" id="Q8IUX4"/>
<dbReference type="PaxDb" id="9606-ENSP00000309749"/>
<dbReference type="PeptideAtlas" id="Q8IUX4"/>
<dbReference type="ProteomicsDB" id="70623">
    <molecule id="Q8IUX4-1"/>
</dbReference>
<dbReference type="ProteomicsDB" id="70624">
    <molecule id="Q8IUX4-2"/>
</dbReference>
<dbReference type="ProteomicsDB" id="70625">
    <molecule id="Q8IUX4-3"/>
</dbReference>
<dbReference type="Pumba" id="Q8IUX4"/>
<dbReference type="Antibodypedia" id="34783">
    <property type="antibodies" value="200 antibodies from 21 providers"/>
</dbReference>
<dbReference type="DNASU" id="200316"/>
<dbReference type="Ensembl" id="ENST00000308521.10">
    <molecule id="Q8IUX4-1"/>
    <property type="protein sequence ID" value="ENSP00000309749.5"/>
    <property type="gene ID" value="ENSG00000128394.17"/>
</dbReference>
<dbReference type="Ensembl" id="ENST00000381565.2">
    <molecule id="Q8IUX4-3"/>
    <property type="protein sequence ID" value="ENSP00000370977.2"/>
    <property type="gene ID" value="ENSG00000128394.17"/>
</dbReference>
<dbReference type="GeneID" id="200316"/>
<dbReference type="KEGG" id="hsa:200316"/>
<dbReference type="MANE-Select" id="ENST00000308521.10">
    <property type="protein sequence ID" value="ENSP00000309749.5"/>
    <property type="RefSeq nucleotide sequence ID" value="NM_145298.6"/>
    <property type="RefSeq protein sequence ID" value="NP_660341.2"/>
</dbReference>
<dbReference type="UCSC" id="uc003awv.4">
    <molecule id="Q8IUX4-1"/>
    <property type="organism name" value="human"/>
</dbReference>
<dbReference type="AGR" id="HGNC:17356"/>
<dbReference type="CTD" id="200316"/>
<dbReference type="DisGeNET" id="200316"/>
<dbReference type="GeneCards" id="APOBEC3F"/>
<dbReference type="HGNC" id="HGNC:17356">
    <property type="gene designation" value="APOBEC3F"/>
</dbReference>
<dbReference type="HPA" id="ENSG00000128394">
    <property type="expression patterns" value="Low tissue specificity"/>
</dbReference>
<dbReference type="MIM" id="608993">
    <property type="type" value="gene"/>
</dbReference>
<dbReference type="neXtProt" id="NX_Q8IUX4"/>
<dbReference type="OpenTargets" id="ENSG00000128394"/>
<dbReference type="PharmGKB" id="PA24896"/>
<dbReference type="VEuPathDB" id="HostDB:ENSG00000128394"/>
<dbReference type="eggNOG" id="KOG4075">
    <property type="taxonomic scope" value="Eukaryota"/>
</dbReference>
<dbReference type="GeneTree" id="ENSGT00940000162695"/>
<dbReference type="HOGENOM" id="CLU_047918_0_0_1"/>
<dbReference type="InParanoid" id="Q8IUX4"/>
<dbReference type="OMA" id="RNPMEAT"/>
<dbReference type="OrthoDB" id="9445293at2759"/>
<dbReference type="PAN-GO" id="Q8IUX4">
    <property type="GO annotations" value="12 GO annotations based on evolutionary models"/>
</dbReference>
<dbReference type="PhylomeDB" id="Q8IUX4"/>
<dbReference type="TreeFam" id="TF331356"/>
<dbReference type="BRENDA" id="3.5.4.38">
    <property type="organism ID" value="2681"/>
</dbReference>
<dbReference type="PathwayCommons" id="Q8IUX4"/>
<dbReference type="SignaLink" id="Q8IUX4"/>
<dbReference type="SIGNOR" id="Q8IUX4"/>
<dbReference type="BioGRID-ORCS" id="200316">
    <property type="hits" value="17 hits in 1105 CRISPR screens"/>
</dbReference>
<dbReference type="CD-CODE" id="232F8A39">
    <property type="entry name" value="P-body"/>
</dbReference>
<dbReference type="ChiTaRS" id="APOBEC3F">
    <property type="organism name" value="human"/>
</dbReference>
<dbReference type="EvolutionaryTrace" id="Q8IUX4"/>
<dbReference type="GeneWiki" id="APOBEC3F"/>
<dbReference type="GenomeRNAi" id="200316"/>
<dbReference type="Pharos" id="Q8IUX4">
    <property type="development level" value="Tbio"/>
</dbReference>
<dbReference type="PRO" id="PR:Q8IUX4"/>
<dbReference type="Proteomes" id="UP000005640">
    <property type="component" value="Chromosome 22"/>
</dbReference>
<dbReference type="RNAct" id="Q8IUX4">
    <property type="molecule type" value="protein"/>
</dbReference>
<dbReference type="Bgee" id="ENSG00000128394">
    <property type="expression patterns" value="Expressed in granulocyte and 104 other cell types or tissues"/>
</dbReference>
<dbReference type="GO" id="GO:0030895">
    <property type="term" value="C:apolipoprotein B mRNA editing enzyme complex"/>
    <property type="evidence" value="ECO:0000304"/>
    <property type="project" value="HGNC-UCL"/>
</dbReference>
<dbReference type="GO" id="GO:0005737">
    <property type="term" value="C:cytoplasm"/>
    <property type="evidence" value="ECO:0000314"/>
    <property type="project" value="UniProtKB"/>
</dbReference>
<dbReference type="GO" id="GO:0005634">
    <property type="term" value="C:nucleus"/>
    <property type="evidence" value="ECO:0000318"/>
    <property type="project" value="GO_Central"/>
</dbReference>
<dbReference type="GO" id="GO:0000932">
    <property type="term" value="C:P-body"/>
    <property type="evidence" value="ECO:0000314"/>
    <property type="project" value="UniProtKB"/>
</dbReference>
<dbReference type="GO" id="GO:1990904">
    <property type="term" value="C:ribonucleoprotein complex"/>
    <property type="evidence" value="ECO:0000314"/>
    <property type="project" value="UniProtKB"/>
</dbReference>
<dbReference type="GO" id="GO:0004126">
    <property type="term" value="F:cytidine deaminase activity"/>
    <property type="evidence" value="ECO:0000314"/>
    <property type="project" value="HGNC-UCL"/>
</dbReference>
<dbReference type="GO" id="GO:0042802">
    <property type="term" value="F:identical protein binding"/>
    <property type="evidence" value="ECO:0000353"/>
    <property type="project" value="IntAct"/>
</dbReference>
<dbReference type="GO" id="GO:0003723">
    <property type="term" value="F:RNA binding"/>
    <property type="evidence" value="ECO:0000314"/>
    <property type="project" value="HGNC-UCL"/>
</dbReference>
<dbReference type="GO" id="GO:0008270">
    <property type="term" value="F:zinc ion binding"/>
    <property type="evidence" value="ECO:0000314"/>
    <property type="project" value="HGNC-UCL"/>
</dbReference>
<dbReference type="GO" id="GO:0016553">
    <property type="term" value="P:base conversion or substitution editing"/>
    <property type="evidence" value="ECO:0000314"/>
    <property type="project" value="HGNC-UCL"/>
</dbReference>
<dbReference type="GO" id="GO:0044355">
    <property type="term" value="P:clearance of foreign intracellular DNA"/>
    <property type="evidence" value="ECO:0000314"/>
    <property type="project" value="GO_Central"/>
</dbReference>
<dbReference type="GO" id="GO:0016554">
    <property type="term" value="P:cytidine to uridine editing"/>
    <property type="evidence" value="ECO:0000318"/>
    <property type="project" value="GO_Central"/>
</dbReference>
<dbReference type="GO" id="GO:0051607">
    <property type="term" value="P:defense response to virus"/>
    <property type="evidence" value="ECO:0000314"/>
    <property type="project" value="UniProtKB"/>
</dbReference>
<dbReference type="GO" id="GO:0070383">
    <property type="term" value="P:DNA cytosine deamination"/>
    <property type="evidence" value="ECO:0000314"/>
    <property type="project" value="UniProtKB"/>
</dbReference>
<dbReference type="GO" id="GO:0045087">
    <property type="term" value="P:innate immune response"/>
    <property type="evidence" value="ECO:0000314"/>
    <property type="project" value="HGNC-UCL"/>
</dbReference>
<dbReference type="GO" id="GO:0045869">
    <property type="term" value="P:negative regulation of single stranded viral RNA replication via double stranded DNA intermediate"/>
    <property type="evidence" value="ECO:0000314"/>
    <property type="project" value="UniProtKB"/>
</dbReference>
<dbReference type="GO" id="GO:0045071">
    <property type="term" value="P:negative regulation of viral genome replication"/>
    <property type="evidence" value="ECO:0000314"/>
    <property type="project" value="UniProtKB"/>
</dbReference>
<dbReference type="GO" id="GO:0048525">
    <property type="term" value="P:negative regulation of viral process"/>
    <property type="evidence" value="ECO:0000314"/>
    <property type="project" value="HGNC-UCL"/>
</dbReference>
<dbReference type="GO" id="GO:0002230">
    <property type="term" value="P:positive regulation of defense response to virus by host"/>
    <property type="evidence" value="ECO:0000314"/>
    <property type="project" value="HGNC-UCL"/>
</dbReference>
<dbReference type="GO" id="GO:0044029">
    <property type="term" value="P:positive regulation of gene expression via chromosomal CpG island demethylation"/>
    <property type="evidence" value="ECO:0000314"/>
    <property type="project" value="UniProtKB"/>
</dbReference>
<dbReference type="GO" id="GO:0010526">
    <property type="term" value="P:transposable element silencing"/>
    <property type="evidence" value="ECO:0000314"/>
    <property type="project" value="UniProtKB"/>
</dbReference>
<dbReference type="CDD" id="cd01283">
    <property type="entry name" value="cytidine_deaminase"/>
    <property type="match status" value="2"/>
</dbReference>
<dbReference type="FunFam" id="3.40.140.10:FF:000044">
    <property type="entry name" value="Apolipoprotein B mRNA editing enzyme catalytic subunit 3B"/>
    <property type="match status" value="1"/>
</dbReference>
<dbReference type="FunFam" id="3.40.140.10:FF:000029">
    <property type="entry name" value="DNA dC-&gt;dU-editing enzyme APOBEC-3G"/>
    <property type="match status" value="1"/>
</dbReference>
<dbReference type="Gene3D" id="3.40.140.10">
    <property type="entry name" value="Cytidine Deaminase, domain 2"/>
    <property type="match status" value="2"/>
</dbReference>
<dbReference type="InterPro" id="IPR016192">
    <property type="entry name" value="APOBEC/CMP_deaminase_Zn-bd"/>
</dbReference>
<dbReference type="InterPro" id="IPR050610">
    <property type="entry name" value="APOBEC_Cyt_Deaminase"/>
</dbReference>
<dbReference type="InterPro" id="IPR002125">
    <property type="entry name" value="CMP_dCMP_dom"/>
</dbReference>
<dbReference type="InterPro" id="IPR016193">
    <property type="entry name" value="Cytidine_deaminase-like"/>
</dbReference>
<dbReference type="PANTHER" id="PTHR13857:SF45">
    <property type="entry name" value="DNA DC-DU-EDITING ENZYME APOBEC-3F"/>
    <property type="match status" value="1"/>
</dbReference>
<dbReference type="PANTHER" id="PTHR13857">
    <property type="entry name" value="MRNA EDITING ENZYME"/>
    <property type="match status" value="1"/>
</dbReference>
<dbReference type="Pfam" id="PF18782">
    <property type="entry name" value="NAD2"/>
    <property type="match status" value="2"/>
</dbReference>
<dbReference type="SUPFAM" id="SSF53927">
    <property type="entry name" value="Cytidine deaminase-like"/>
    <property type="match status" value="2"/>
</dbReference>
<dbReference type="PROSITE" id="PS00903">
    <property type="entry name" value="CYT_DCMP_DEAMINASES_1"/>
    <property type="match status" value="2"/>
</dbReference>
<dbReference type="PROSITE" id="PS51747">
    <property type="entry name" value="CYT_DCMP_DEAMINASES_2"/>
    <property type="match status" value="2"/>
</dbReference>
<keyword id="KW-0002">3D-structure</keyword>
<keyword id="KW-0025">Alternative splicing</keyword>
<keyword id="KW-0051">Antiviral defense</keyword>
<keyword id="KW-0963">Cytoplasm</keyword>
<keyword id="KW-1015">Disulfide bond</keyword>
<keyword id="KW-0945">Host-virus interaction</keyword>
<keyword id="KW-0378">Hydrolase</keyword>
<keyword id="KW-0391">Immunity</keyword>
<keyword id="KW-0399">Innate immunity</keyword>
<keyword id="KW-1017">Isopeptide bond</keyword>
<keyword id="KW-0479">Metal-binding</keyword>
<keyword id="KW-1267">Proteomics identification</keyword>
<keyword id="KW-1185">Reference proteome</keyword>
<keyword id="KW-0677">Repeat</keyword>
<keyword id="KW-0832">Ubl conjugation</keyword>
<keyword id="KW-0862">Zinc</keyword>
<feature type="chain" id="PRO_0000171757" description="DNA dC-&gt;dU-editing enzyme APOBEC-3F">
    <location>
        <begin position="1"/>
        <end position="373"/>
    </location>
</feature>
<feature type="domain" description="CMP/dCMP-type deaminase 1" evidence="1">
    <location>
        <begin position="29"/>
        <end position="137"/>
    </location>
</feature>
<feature type="domain" description="CMP/dCMP-type deaminase 2" evidence="1">
    <location>
        <begin position="174"/>
        <end position="321"/>
    </location>
</feature>
<feature type="active site" description="Proton donor" evidence="1 25 37">
    <location>
        <position position="251"/>
    </location>
</feature>
<feature type="binding site" evidence="1">
    <location>
        <position position="65"/>
    </location>
    <ligand>
        <name>Zn(2+)</name>
        <dbReference type="ChEBI" id="CHEBI:29105"/>
        <label>1</label>
    </ligand>
</feature>
<feature type="binding site" evidence="1">
    <location>
        <position position="96"/>
    </location>
    <ligand>
        <name>Zn(2+)</name>
        <dbReference type="ChEBI" id="CHEBI:29105"/>
        <label>1</label>
    </ligand>
</feature>
<feature type="binding site" evidence="1">
    <location>
        <position position="99"/>
    </location>
    <ligand>
        <name>Zn(2+)</name>
        <dbReference type="ChEBI" id="CHEBI:29105"/>
        <label>1</label>
    </ligand>
</feature>
<feature type="binding site" evidence="1 24 25 37">
    <location>
        <position position="249"/>
    </location>
    <ligand>
        <name>Zn(2+)</name>
        <dbReference type="ChEBI" id="CHEBI:29105"/>
        <label>2</label>
        <note>catalytic</note>
    </ligand>
</feature>
<feature type="binding site" evidence="1 24 25 37">
    <location>
        <position position="280"/>
    </location>
    <ligand>
        <name>Zn(2+)</name>
        <dbReference type="ChEBI" id="CHEBI:29105"/>
        <label>2</label>
        <note>catalytic</note>
    </ligand>
</feature>
<feature type="binding site" evidence="1 24 25 37">
    <location>
        <position position="283"/>
    </location>
    <ligand>
        <name>Zn(2+)</name>
        <dbReference type="ChEBI" id="CHEBI:29105"/>
        <label>2</label>
        <note>catalytic</note>
    </ligand>
</feature>
<feature type="disulfide bond" evidence="24 35">
    <location>
        <begin position="280"/>
        <end position="283"/>
    </location>
</feature>
<feature type="cross-link" description="(Microbial infection) Glycyl lysine isopeptide (Lys-Gly) (interchain with G-Cter in ubiquitin)" evidence="33">
    <location>
        <position position="52"/>
    </location>
</feature>
<feature type="cross-link" description="(Microbial infection) Glycyl lysine isopeptide (Lys-Gly) (interchain with G-Cter in ubiquitin)" evidence="33">
    <location>
        <position position="234"/>
    </location>
</feature>
<feature type="cross-link" description="(Microbial infection) Glycyl lysine isopeptide (Lys-Gly) (interchain with G-Cter in ubiquitin)" evidence="33">
    <location>
        <position position="334"/>
    </location>
</feature>
<feature type="cross-link" description="(Microbial infection) Glycyl lysine isopeptide (Lys-Gly) (interchain with G-Cter in ubiquitin)" evidence="33">
    <location>
        <position position="352"/>
    </location>
</feature>
<feature type="cross-link" description="(Microbial infection) Glycyl lysine isopeptide (Lys-Gly) (interchain with G-Cter in ubiquitin)" evidence="33">
    <location>
        <position position="355"/>
    </location>
</feature>
<feature type="cross-link" description="(Microbial infection) Glycyl lysine isopeptide (Lys-Gly) (interchain with G-Cter in ubiquitin)" evidence="33">
    <location>
        <position position="358"/>
    </location>
</feature>
<feature type="splice variant" id="VSP_009803" description="In isoform 2." evidence="30">
    <original>VYSQPEHHAEMCFLSWFCGNQL</original>
    <variation>VPPGLQSLCRQELSQLGKQTTH</variation>
    <location>
        <begin position="58"/>
        <end position="79"/>
    </location>
</feature>
<feature type="splice variant" id="VSP_042754" description="In isoform 3." evidence="29">
    <original>YSQPEHHAEMCFLSWFCGNQLPAYKCFQITWFVSWTPCPDCVAKLAEFLAEHPNV</original>
    <variation>PRSFIRAPFQVLSSPFGQCAPPHGTAQVQWPPQLTAGREQGRP</variation>
    <location>
        <begin position="59"/>
        <end position="113"/>
    </location>
</feature>
<feature type="splice variant" id="VSP_009804" description="In isoform 2." evidence="30">
    <location>
        <begin position="80"/>
        <end position="373"/>
    </location>
</feature>
<feature type="splice variant" id="VSP_042755" description="In isoform 3." evidence="29">
    <location>
        <begin position="114"/>
        <end position="373"/>
    </location>
</feature>
<feature type="sequence variant" id="VAR_038355" description="In dbSNP:rs35053197." evidence="5">
    <original>R</original>
    <variation>P</variation>
    <location>
        <position position="48"/>
    </location>
</feature>
<feature type="sequence variant" id="VAR_018145" description="In dbSNP:rs2076109.">
    <original>Q</original>
    <variation>L</variation>
    <location>
        <position position="61"/>
    </location>
</feature>
<feature type="sequence variant" id="VAR_018146" description="In dbSNP:rs201939303.">
    <original>P</original>
    <variation>L</variation>
    <location>
        <position position="97"/>
    </location>
</feature>
<feature type="sequence variant" id="VAR_018147" description="In dbSNP:rs2020390." evidence="5">
    <original>A</original>
    <variation>S</variation>
    <location>
        <position position="108"/>
    </location>
</feature>
<feature type="sequence variant" id="VAR_025058" description="In dbSNP:rs34182094." evidence="27">
    <original>A</original>
    <variation>T</variation>
    <location>
        <position position="178"/>
    </location>
</feature>
<feature type="sequence variant" id="VAR_018148" description="In dbSNP:rs2076101." evidence="27">
    <original>V</original>
    <variation>I</variation>
    <location>
        <position position="231"/>
    </location>
</feature>
<feature type="sequence variant" id="VAR_025059" description="In dbSNP:rs12157816." evidence="27">
    <original>Y</original>
    <variation>C</variation>
    <location>
        <position position="307"/>
    </location>
</feature>
<feature type="mutagenesis site" description="Reduced but not abolished antiviral activity." evidence="10">
    <original>H</original>
    <variation>C</variation>
    <location>
        <position position="65"/>
    </location>
</feature>
<feature type="mutagenesis site" description="Nearly abolished antiviral activity; when associated with R-249." evidence="10">
    <original>H</original>
    <variation>R</variation>
    <location>
        <position position="65"/>
    </location>
</feature>
<feature type="mutagenesis site" description="Decrease in cytidine deaminase and antiviral activity; when associated with A-251." evidence="9">
    <original>E</original>
    <variation>A</variation>
    <location>
        <position position="67"/>
    </location>
</feature>
<feature type="mutagenesis site" description="No effect on cytidine deaminase and antiviral activity." evidence="9">
    <original>E</original>
    <variation>A</variation>
    <location>
        <position position="67"/>
    </location>
</feature>
<feature type="mutagenesis site" description="Reduced but not abolished antiviral activity. Nearly abolished antiviral activity; when associated with Q-251." evidence="10">
    <original>E</original>
    <variation>Q</variation>
    <location>
        <position position="67"/>
    </location>
</feature>
<feature type="mutagenesis site" description="Reduced but not abolished antiviral activity. Nearly abolished antiviral activity; when associated with Q-280." evidence="10">
    <location>
        <position position="96"/>
    </location>
</feature>
<feature type="mutagenesis site" description="Reduced but not abolished antiviral activityy. Nearly abolished antiviral activity; when associated with S-283." evidence="10">
    <original>C</original>
    <variation>S</variation>
    <location>
        <position position="99"/>
    </location>
</feature>
<feature type="mutagenesis site" description="Reduced but not abolished antiviral activity." evidence="10">
    <original>H</original>
    <variation>C</variation>
    <location>
        <position position="249"/>
    </location>
</feature>
<feature type="mutagenesis site" description="Nearly abolished antiviral activity; when associated with R-65." evidence="10">
    <original>H</original>
    <variation>R</variation>
    <location>
        <position position="249"/>
    </location>
</feature>
<feature type="mutagenesis site" description="Decrease in cytidine deaminase and antiviral activity." evidence="9">
    <original>E</original>
    <variation>A</variation>
    <location>
        <position position="251"/>
    </location>
</feature>
<feature type="mutagenesis site" description="Decrease in cytidine deaminase and antiviral activity; when associated with A-67." evidence="9">
    <original>E</original>
    <variation>A</variation>
    <location>
        <position position="251"/>
    </location>
</feature>
<feature type="mutagenesis site" description="Remains able to bind Vif." evidence="21">
    <original>E</original>
    <variation>Q</variation>
    <location>
        <position position="251"/>
    </location>
</feature>
<feature type="mutagenesis site" description="Reduced but not abolished antiviral activity. Nearly abolished antiviral activity; when associated with Q-67." evidence="10">
    <location>
        <position position="251"/>
    </location>
</feature>
<feature type="mutagenesis site" description="Resistant to HIV-1 Vif and reduces Vif binding but is still efficiently incorporated into the virion." evidence="21">
    <original>L</original>
    <variation>D</variation>
    <location>
        <position position="255"/>
    </location>
</feature>
<feature type="mutagenesis site" description="Resistant to HIV-1 Vif and reduces Vif binding but is still efficiently incorporated into the virion." evidence="21">
    <original>F</original>
    <variation>A</variation>
    <location>
        <position position="258"/>
    </location>
</feature>
<feature type="mutagenesis site" description="Resistant to HIV-1 Vif and reduces Vif binding but is still efficiently incorporated into the virion." evidence="21">
    <original>C</original>
    <variation>K</variation>
    <location>
        <position position="259"/>
    </location>
</feature>
<feature type="mutagenesis site" description="Does not affect interaction with APOBEC3G." evidence="25">
    <original>DD</original>
    <variation>RR</variation>
    <location>
        <begin position="260"/>
        <end position="261"/>
    </location>
</feature>
<feature type="mutagenesis site" description="Resistant to HIV-1 Vif and abolishes Vif binding but is still efficiently incorporated into the virion." evidence="21">
    <original>IL</original>
    <variation>AA</variation>
    <location>
        <begin position="262"/>
        <end position="263"/>
    </location>
</feature>
<feature type="mutagenesis site" description="Resistant to HIV-1 Vif and reduces Vif binding but is still efficiently incorporated into the virion." evidence="21">
    <original>S</original>
    <variation>D</variation>
    <location>
        <position position="264"/>
    </location>
</feature>
<feature type="mutagenesis site" description="Impaired interaction with HIV-1 Vif protein." evidence="25">
    <original>P</original>
    <variation>A</variation>
    <location>
        <position position="265"/>
    </location>
</feature>
<feature type="mutagenesis site" description="Resistant to HIV-1 Vif and reduces Vif binding but is still efficiently incorporated into the virion." evidence="21">
    <original>Y</original>
    <variation>A</variation>
    <location>
        <position position="269"/>
    </location>
</feature>
<feature type="mutagenesis site" description="Reduced but not abolished antiviral activity. Nearly abolished antiviral activity; when associated with Q-96." evidence="10">
    <original>C</original>
    <variation>S</variation>
    <location>
        <position position="280"/>
    </location>
</feature>
<feature type="mutagenesis site" description="Reduced but not abolished antiviral activity. Nearly abolished antiviral activity; when associated with S-99." evidence="10">
    <original>C</original>
    <variation>S</variation>
    <location>
        <position position="283"/>
    </location>
</feature>
<feature type="mutagenesis site" description="Abolished interaction with HIV-1 Vif protein. Resistant to HIV-1 Vif and reduces Vif binding but is still efficiently incorporated into the virion." evidence="21 25">
    <original>E</original>
    <variation>K</variation>
    <location>
        <position position="289"/>
    </location>
</feature>
<feature type="mutagenesis site" description="Resistant to HIV-1 Vif and reduces Vif binding but is still efficiently incorporated into the virion." evidence="21">
    <original>F</original>
    <variation>K</variation>
    <location>
        <position position="290"/>
    </location>
</feature>
<feature type="mutagenesis site" description="Abolished interaction with HIV-1 Vif protein." evidence="25">
    <original>R</original>
    <variation>D</variation>
    <location>
        <position position="293"/>
    </location>
</feature>
<feature type="mutagenesis site" description="Resistant to HIV-1 Vif, reduces Vif binding and abolishes incorporation into the virion." evidence="21">
    <original>H</original>
    <variation>D</variation>
    <location>
        <position position="294"/>
    </location>
</feature>
<feature type="mutagenesis site" description="Resistant to HIV-1 Vif and reduces Vif binding." evidence="21">
    <original>E</original>
    <variation>K</variation>
    <variation>A</variation>
    <location>
        <position position="324"/>
    </location>
</feature>
<feature type="mutagenesis site" description="Abolished interaction with HIV-1 Vif protein." evidence="25">
    <original>E</original>
    <variation>R</variation>
    <location>
        <position position="324"/>
    </location>
</feature>
<feature type="mutagenesis site" description="Does not affect interaction with HIV-1 Vif protein." evidence="25">
    <original>D</original>
    <variation>R</variation>
    <location>
        <position position="347"/>
    </location>
</feature>
<feature type="helix" evidence="38">
    <location>
        <begin position="197"/>
        <end position="204"/>
    </location>
</feature>
<feature type="helix" evidence="38">
    <location>
        <begin position="208"/>
        <end position="212"/>
    </location>
</feature>
<feature type="strand" evidence="38">
    <location>
        <begin position="217"/>
        <end position="226"/>
    </location>
</feature>
<feature type="strand" evidence="38">
    <location>
        <begin position="232"/>
        <end position="239"/>
    </location>
</feature>
<feature type="turn" evidence="39">
    <location>
        <begin position="244"/>
        <end position="246"/>
    </location>
</feature>
<feature type="helix" evidence="38">
    <location>
        <begin position="250"/>
        <end position="261"/>
    </location>
</feature>
<feature type="strand" evidence="38">
    <location>
        <begin position="267"/>
        <end position="277"/>
    </location>
</feature>
<feature type="helix" evidence="38">
    <location>
        <begin position="281"/>
        <end position="293"/>
    </location>
</feature>
<feature type="strand" evidence="38">
    <location>
        <begin position="297"/>
        <end position="305"/>
    </location>
</feature>
<feature type="turn" evidence="39">
    <location>
        <begin position="307"/>
        <end position="310"/>
    </location>
</feature>
<feature type="helix" evidence="38">
    <location>
        <begin position="312"/>
        <end position="323"/>
    </location>
</feature>
<feature type="strand" evidence="38">
    <location>
        <begin position="327"/>
        <end position="330"/>
    </location>
</feature>
<feature type="helix" evidence="38">
    <location>
        <begin position="333"/>
        <end position="343"/>
    </location>
</feature>
<feature type="helix" evidence="38">
    <location>
        <begin position="357"/>
        <end position="372"/>
    </location>
</feature>
<name>ABC3F_HUMAN</name>
<sequence length="373" mass="45020">MKPHFRNTVERMYRDTFSYNFYNRPILSRRNTVWLCYEVKTKGPSRPRLDAKIFRGQVYSQPEHHAEMCFLSWFCGNQLPAYKCFQITWFVSWTPCPDCVAKLAEFLAEHPNVTLTISAARLYYYWERDYRRALCRLSQAGARVKIMDDEEFAYCWENFVYSEGQPFMPWYKFDDNYAFLHRTLKEILRNPMEAMYPHIFYFHFKNLRKAYGRNESWLCFTMEVVKHHSPVSWKRGVFRNQVDPETHCHAERCFLSWFCDDILSPNTNYEVTWYTSWSPCPECAGEVAEFLARHSNVNLTIFTARLYYFWDTDYQEGLRSLSQEGASVEIMGYKDFKYCWENFVYNDDEPFKPWKGLKYNFLFLDSKLQEILE</sequence>
<gene>
    <name evidence="28 34" type="primary">APOBEC3F</name>
</gene>
<reference key="1">
    <citation type="journal article" date="2004" name="Genome Biol.">
        <title>A genome annotation-driven approach to cloning the human ORFeome.</title>
        <authorList>
            <person name="Collins J.E."/>
            <person name="Wright C.L."/>
            <person name="Edwards C.A."/>
            <person name="Davis M.P."/>
            <person name="Grinham J.A."/>
            <person name="Cole C.G."/>
            <person name="Goward M.E."/>
            <person name="Aguado B."/>
            <person name="Mallya M."/>
            <person name="Mokrab Y."/>
            <person name="Huckle E.J."/>
            <person name="Beare D.M."/>
            <person name="Dunham I."/>
        </authorList>
    </citation>
    <scope>NUCLEOTIDE SEQUENCE [LARGE SCALE MRNA] (ISOFORM 3)</scope>
</reference>
<reference key="2">
    <citation type="submission" date="2005-07" db="EMBL/GenBank/DDBJ databases">
        <authorList>
            <consortium name="SeattleSNPs variation discovery resource"/>
        </authorList>
    </citation>
    <scope>NUCLEOTIDE SEQUENCE [GENOMIC DNA] (ISOFORM 1)</scope>
    <scope>VARIANTS THR-178; ILE-231 AND CYS-307</scope>
</reference>
<reference key="3">
    <citation type="journal article" date="1999" name="Nature">
        <title>The DNA sequence of human chromosome 22.</title>
        <authorList>
            <person name="Dunham I."/>
            <person name="Hunt A.R."/>
            <person name="Collins J.E."/>
            <person name="Bruskiewich R."/>
            <person name="Beare D.M."/>
            <person name="Clamp M."/>
            <person name="Smink L.J."/>
            <person name="Ainscough R."/>
            <person name="Almeida J.P."/>
            <person name="Babbage A.K."/>
            <person name="Bagguley C."/>
            <person name="Bailey J."/>
            <person name="Barlow K.F."/>
            <person name="Bates K.N."/>
            <person name="Beasley O.P."/>
            <person name="Bird C.P."/>
            <person name="Blakey S.E."/>
            <person name="Bridgeman A.M."/>
            <person name="Buck D."/>
            <person name="Burgess J."/>
            <person name="Burrill W.D."/>
            <person name="Burton J."/>
            <person name="Carder C."/>
            <person name="Carter N.P."/>
            <person name="Chen Y."/>
            <person name="Clark G."/>
            <person name="Clegg S.M."/>
            <person name="Cobley V.E."/>
            <person name="Cole C.G."/>
            <person name="Collier R.E."/>
            <person name="Connor R."/>
            <person name="Conroy D."/>
            <person name="Corby N.R."/>
            <person name="Coville G.J."/>
            <person name="Cox A.V."/>
            <person name="Davis J."/>
            <person name="Dawson E."/>
            <person name="Dhami P.D."/>
            <person name="Dockree C."/>
            <person name="Dodsworth S.J."/>
            <person name="Durbin R.M."/>
            <person name="Ellington A.G."/>
            <person name="Evans K.L."/>
            <person name="Fey J.M."/>
            <person name="Fleming K."/>
            <person name="French L."/>
            <person name="Garner A.A."/>
            <person name="Gilbert J.G.R."/>
            <person name="Goward M.E."/>
            <person name="Grafham D.V."/>
            <person name="Griffiths M.N.D."/>
            <person name="Hall C."/>
            <person name="Hall R.E."/>
            <person name="Hall-Tamlyn G."/>
            <person name="Heathcott R.W."/>
            <person name="Ho S."/>
            <person name="Holmes S."/>
            <person name="Hunt S.E."/>
            <person name="Jones M.C."/>
            <person name="Kershaw J."/>
            <person name="Kimberley A.M."/>
            <person name="King A."/>
            <person name="Laird G.K."/>
            <person name="Langford C.F."/>
            <person name="Leversha M.A."/>
            <person name="Lloyd C."/>
            <person name="Lloyd D.M."/>
            <person name="Martyn I.D."/>
            <person name="Mashreghi-Mohammadi M."/>
            <person name="Matthews L.H."/>
            <person name="Mccann O.T."/>
            <person name="Mcclay J."/>
            <person name="Mclaren S."/>
            <person name="McMurray A.A."/>
            <person name="Milne S.A."/>
            <person name="Mortimore B.J."/>
            <person name="Odell C.N."/>
            <person name="Pavitt R."/>
            <person name="Pearce A.V."/>
            <person name="Pearson D."/>
            <person name="Phillimore B.J.C.T."/>
            <person name="Phillips S.H."/>
            <person name="Plumb R.W."/>
            <person name="Ramsay H."/>
            <person name="Ramsey Y."/>
            <person name="Rogers L."/>
            <person name="Ross M.T."/>
            <person name="Scott C.E."/>
            <person name="Sehra H.K."/>
            <person name="Skuce C.D."/>
            <person name="Smalley S."/>
            <person name="Smith M.L."/>
            <person name="Soderlund C."/>
            <person name="Spragon L."/>
            <person name="Steward C.A."/>
            <person name="Sulston J.E."/>
            <person name="Swann R.M."/>
            <person name="Vaudin M."/>
            <person name="Wall M."/>
            <person name="Wallis J.M."/>
            <person name="Whiteley M.N."/>
            <person name="Willey D.L."/>
            <person name="Williams L."/>
            <person name="Williams S.A."/>
            <person name="Williamson H."/>
            <person name="Wilmer T.E."/>
            <person name="Wilming L."/>
            <person name="Wright C.L."/>
            <person name="Hubbard T."/>
            <person name="Bentley D.R."/>
            <person name="Beck S."/>
            <person name="Rogers J."/>
            <person name="Shimizu N."/>
            <person name="Minoshima S."/>
            <person name="Kawasaki K."/>
            <person name="Sasaki T."/>
            <person name="Asakawa S."/>
            <person name="Kudoh J."/>
            <person name="Shintani A."/>
            <person name="Shibuya K."/>
            <person name="Yoshizaki Y."/>
            <person name="Aoki N."/>
            <person name="Mitsuyama S."/>
            <person name="Roe B.A."/>
            <person name="Chen F."/>
            <person name="Chu L."/>
            <person name="Crabtree J."/>
            <person name="Deschamps S."/>
            <person name="Do A."/>
            <person name="Do T."/>
            <person name="Dorman A."/>
            <person name="Fang F."/>
            <person name="Fu Y."/>
            <person name="Hu P."/>
            <person name="Hua A."/>
            <person name="Kenton S."/>
            <person name="Lai H."/>
            <person name="Lao H.I."/>
            <person name="Lewis J."/>
            <person name="Lewis S."/>
            <person name="Lin S.-P."/>
            <person name="Loh P."/>
            <person name="Malaj E."/>
            <person name="Nguyen T."/>
            <person name="Pan H."/>
            <person name="Phan S."/>
            <person name="Qi S."/>
            <person name="Qian Y."/>
            <person name="Ray L."/>
            <person name="Ren Q."/>
            <person name="Shaull S."/>
            <person name="Sloan D."/>
            <person name="Song L."/>
            <person name="Wang Q."/>
            <person name="Wang Y."/>
            <person name="Wang Z."/>
            <person name="White J."/>
            <person name="Willingham D."/>
            <person name="Wu H."/>
            <person name="Yao Z."/>
            <person name="Zhan M."/>
            <person name="Zhang G."/>
            <person name="Chissoe S."/>
            <person name="Murray J."/>
            <person name="Miller N."/>
            <person name="Minx P."/>
            <person name="Fulton R."/>
            <person name="Johnson D."/>
            <person name="Bemis G."/>
            <person name="Bentley D."/>
            <person name="Bradshaw H."/>
            <person name="Bourne S."/>
            <person name="Cordes M."/>
            <person name="Du Z."/>
            <person name="Fulton L."/>
            <person name="Goela D."/>
            <person name="Graves T."/>
            <person name="Hawkins J."/>
            <person name="Hinds K."/>
            <person name="Kemp K."/>
            <person name="Latreille P."/>
            <person name="Layman D."/>
            <person name="Ozersky P."/>
            <person name="Rohlfing T."/>
            <person name="Scheet P."/>
            <person name="Walker C."/>
            <person name="Wamsley A."/>
            <person name="Wohldmann P."/>
            <person name="Pepin K."/>
            <person name="Nelson J."/>
            <person name="Korf I."/>
            <person name="Bedell J.A."/>
            <person name="Hillier L.W."/>
            <person name="Mardis E."/>
            <person name="Waterston R."/>
            <person name="Wilson R."/>
            <person name="Emanuel B.S."/>
            <person name="Shaikh T."/>
            <person name="Kurahashi H."/>
            <person name="Saitta S."/>
            <person name="Budarf M.L."/>
            <person name="McDermid H.E."/>
            <person name="Johnson A."/>
            <person name="Wong A.C.C."/>
            <person name="Morrow B.E."/>
            <person name="Edelmann L."/>
            <person name="Kim U.J."/>
            <person name="Shizuya H."/>
            <person name="Simon M.I."/>
            <person name="Dumanski J.P."/>
            <person name="Peyrard M."/>
            <person name="Kedra D."/>
            <person name="Seroussi E."/>
            <person name="Fransson I."/>
            <person name="Tapia I."/>
            <person name="Bruder C.E."/>
            <person name="O'Brien K.P."/>
            <person name="Wilkinson P."/>
            <person name="Bodenteich A."/>
            <person name="Hartman K."/>
            <person name="Hu X."/>
            <person name="Khan A.S."/>
            <person name="Lane L."/>
            <person name="Tilahun Y."/>
            <person name="Wright H."/>
        </authorList>
    </citation>
    <scope>NUCLEOTIDE SEQUENCE [LARGE SCALE GENOMIC DNA]</scope>
</reference>
<reference key="4">
    <citation type="submission" date="2005-07" db="EMBL/GenBank/DDBJ databases">
        <authorList>
            <person name="Mural R.J."/>
            <person name="Istrail S."/>
            <person name="Sutton G.G."/>
            <person name="Florea L."/>
            <person name="Halpern A.L."/>
            <person name="Mobarry C.M."/>
            <person name="Lippert R."/>
            <person name="Walenz B."/>
            <person name="Shatkay H."/>
            <person name="Dew I."/>
            <person name="Miller J.R."/>
            <person name="Flanigan M.J."/>
            <person name="Edwards N.J."/>
            <person name="Bolanos R."/>
            <person name="Fasulo D."/>
            <person name="Halldorsson B.V."/>
            <person name="Hannenhalli S."/>
            <person name="Turner R."/>
            <person name="Yooseph S."/>
            <person name="Lu F."/>
            <person name="Nusskern D.R."/>
            <person name="Shue B.C."/>
            <person name="Zheng X.H."/>
            <person name="Zhong F."/>
            <person name="Delcher A.L."/>
            <person name="Huson D.H."/>
            <person name="Kravitz S.A."/>
            <person name="Mouchard L."/>
            <person name="Reinert K."/>
            <person name="Remington K.A."/>
            <person name="Clark A.G."/>
            <person name="Waterman M.S."/>
            <person name="Eichler E.E."/>
            <person name="Adams M.D."/>
            <person name="Hunkapiller M.W."/>
            <person name="Myers E.W."/>
            <person name="Venter J.C."/>
        </authorList>
    </citation>
    <scope>NUCLEOTIDE SEQUENCE [LARGE SCALE GENOMIC DNA]</scope>
</reference>
<reference key="5">
    <citation type="journal article" date="2004" name="Genome Res.">
        <title>The status, quality, and expansion of the NIH full-length cDNA project: the Mammalian Gene Collection (MGC).</title>
        <authorList>
            <consortium name="The MGC Project Team"/>
        </authorList>
    </citation>
    <scope>NUCLEOTIDE SEQUENCE [LARGE SCALE MRNA] (ISOFORMS 1 AND 2)</scope>
    <scope>VARIANTS PRO-48 AND SER-108</scope>
    <source>
        <tissue>Pancreas</tissue>
        <tissue>Spleen</tissue>
        <tissue>Uterus</tissue>
    </source>
</reference>
<reference key="6">
    <citation type="journal article" date="2002" name="Genomics">
        <title>An anthropoid-specific locus of orphan C to U RNA-editing enzymes on chromosome 22.</title>
        <authorList>
            <person name="Jarmuz A."/>
            <person name="Chester A."/>
            <person name="Bayliss J."/>
            <person name="Gisbourne J."/>
            <person name="Dunham I."/>
            <person name="Scott J."/>
            <person name="Navaratnam N."/>
        </authorList>
    </citation>
    <scope>GENE FAMILY ORGANIZATION</scope>
    <scope>TISSUE SPECIFICITY</scope>
</reference>
<reference key="7">
    <citation type="journal article" date="2003" name="Trends Genet.">
        <title>Messenger RNA editing in mammals: new members of the APOBEC family seeking roles in the family business.</title>
        <authorList>
            <person name="Wedekind J.E."/>
            <person name="Dance G.S.C."/>
            <person name="Sowden M.P."/>
            <person name="Smith H.C."/>
        </authorList>
    </citation>
    <scope>REVIEW ON APOBEC FAMILIES</scope>
</reference>
<reference key="8">
    <citation type="journal article" date="2004" name="J. Virol.">
        <title>Human APOBEC3F is another host factor that blocks human immunodeficiency virus type 1 replication.</title>
        <authorList>
            <person name="Zheng Y.H."/>
            <person name="Irwin D."/>
            <person name="Kurosu T."/>
            <person name="Tokunaga K."/>
            <person name="Sata T."/>
            <person name="Peterlin B.M."/>
        </authorList>
    </citation>
    <scope>FUNCTION</scope>
</reference>
<reference key="9">
    <citation type="journal article" date="2004" name="EMBO J.">
        <title>A second human antiretroviral factor, APOBEC3F, is suppressed by the HIV-1 and HIV-2 Vif proteins.</title>
        <authorList>
            <person name="Wiegand H.L."/>
            <person name="Doehle B.P."/>
            <person name="Bogerd H.P."/>
            <person name="Cullen B.R."/>
        </authorList>
    </citation>
    <scope>FUNCTION IN HIV-1 INFECTIVITY</scope>
    <scope>INTERACTION WITH HIV-1 VIF (MICROBIAL INFECTION)</scope>
    <scope>TISSUE SPECIFICITY</scope>
</reference>
<reference key="10">
    <citation type="journal article" date="2006" name="Curr. Biol.">
        <title>APOBEC3A is a potent inhibitor of adeno-associated virus and retrotransposons.</title>
        <authorList>
            <person name="Chen H."/>
            <person name="Lilley C.E."/>
            <person name="Yu Q."/>
            <person name="Lee D.V."/>
            <person name="Chou J."/>
            <person name="Narvaiza I."/>
            <person name="Landau N.R."/>
            <person name="Weitzman M.D."/>
        </authorList>
    </citation>
    <scope>FUNCTION IN RETROTRANSPOSITION</scope>
    <scope>SUBCELLULAR LOCATION</scope>
</reference>
<reference key="11">
    <citation type="journal article" date="2006" name="J. Biol. Chem.">
        <title>Reversed functional organization of mouse and human APOBEC3 cytidine deaminase domains.</title>
        <authorList>
            <person name="Hakata Y."/>
            <person name="Landau N.R."/>
        </authorList>
    </citation>
    <scope>DOMAIN CMP/DCMP DEAMINASE</scope>
    <scope>MUTAGENESIS OF GLU-67 AND GLU-251</scope>
</reference>
<reference key="12">
    <citation type="journal article" date="2006" name="J. Virol.">
        <title>Restriction of foamy viruses by APOBEC cytidine deaminases.</title>
        <authorList>
            <person name="Delebecque F."/>
            <person name="Suspene R."/>
            <person name="Calattini S."/>
            <person name="Casartelli N."/>
            <person name="Saib A."/>
            <person name="Froment A."/>
            <person name="Wain-Hobson S."/>
            <person name="Gessain A."/>
            <person name="Vartanian J.P."/>
            <person name="Schwartz O."/>
        </authorList>
    </citation>
    <scope>FUNCTION IN SFV RESTRICTION</scope>
</reference>
<reference key="13">
    <citation type="journal article" date="2006" name="PLoS Pathog.">
        <title>Human retroviral host restriction factors APOBEC3G and APOBEC3F localize to mRNA processing bodies.</title>
        <authorList>
            <person name="Wichroski M.J."/>
            <person name="Robb G.B."/>
            <person name="Rana T.M."/>
        </authorList>
    </citation>
    <scope>SUBCELLULAR LOCATION</scope>
    <scope>INTERACTION WITH APOBEC3G</scope>
</reference>
<reference key="14">
    <citation type="journal article" date="2007" name="J. Biol. Chem.">
        <title>APOBEC3F can inhibit the accumulation of HIV-1 reverse transcription products in the absence of hypermutation. Comparisons with APOBEC3G.</title>
        <authorList>
            <person name="Holmes R.K."/>
            <person name="Koning F.A."/>
            <person name="Bishop K.N."/>
            <person name="Malim M.H."/>
        </authorList>
    </citation>
    <scope>FUNCTION</scope>
    <scope>CATALYTIC ACTIVITY</scope>
    <scope>MUTAGENESIS OF HIS-65; GLU-67; CYS-96; CYS-99; HIS-249; GLU-251; CYS-280 AND CYS-283</scope>
</reference>
<reference key="15">
    <citation type="journal article" date="2008" name="Annu. Rev. Immunol.">
        <title>The APOBEC3 cytidine deaminases: an innate defensive network opposing exogenous retroviruses and endogenous retroelements.</title>
        <authorList>
            <person name="Chiu Y.L."/>
            <person name="Greene W.C."/>
        </authorList>
    </citation>
    <scope>REVIEW</scope>
</reference>
<reference key="16">
    <citation type="journal article" date="2008" name="Curr. Opin. Infect. Dis.">
        <title>Hepatitis B: modern concepts in pathogenesis--APOBEC3 cytidine deaminases as effectors in innate immunity against the hepatitis B virus.</title>
        <authorList>
            <person name="Bonvin M."/>
            <person name="Greeve J."/>
        </authorList>
    </citation>
    <scope>REVIEW ON FUNCTION IN HBV RESTRICTION</scope>
</reference>
<reference key="17">
    <citation type="journal article" date="2009" name="J. Virol.">
        <title>Restriction of equine infectious anemia virus by equine APOBEC3 cytidine deaminases.</title>
        <authorList>
            <person name="Zielonka J."/>
            <person name="Bravo I.G."/>
            <person name="Marino D."/>
            <person name="Conrad E."/>
            <person name="Perkovic M."/>
            <person name="Battenberg M."/>
            <person name="Cichutek K."/>
            <person name="Muenk C."/>
        </authorList>
    </citation>
    <scope>FUNCTION IN EIAV RESTRICTION</scope>
</reference>
<reference key="18">
    <citation type="journal article" date="2010" name="J. Virol.">
        <title>APOBEC3F and APOBEC3G inhibit HIV-1 DNA integration by different mechanisms.</title>
        <authorList>
            <person name="Mbisa J.L."/>
            <person name="Bu W."/>
            <person name="Pathak V.K."/>
        </authorList>
    </citation>
    <scope>FUNCTION IN HIV-1 RESTRICTION</scope>
</reference>
<reference key="19">
    <citation type="journal article" date="2010" name="J. Virol.">
        <title>Inhibition of xenotropic murine leukemia virus-related virus by APOBEC3 proteins and antiviral drugs.</title>
        <authorList>
            <person name="Paprotka T."/>
            <person name="Venkatachari N.J."/>
            <person name="Chaipan C."/>
            <person name="Burdick R."/>
            <person name="Delviks-Frankenberry K.A."/>
            <person name="Hu W.S."/>
            <person name="Pathak V.K."/>
        </authorList>
    </citation>
    <scope>FUNCTION IN XMRV RESTRICTION</scope>
</reference>
<reference key="20">
    <citation type="journal article" date="2010" name="Nat. Struct. Mol. Biol.">
        <title>APOBEC3 proteins mediate the clearance of foreign DNA from human cells.</title>
        <authorList>
            <person name="Stenglein M.D."/>
            <person name="Burns M.B."/>
            <person name="Li M."/>
            <person name="Lengyel J."/>
            <person name="Harris R.S."/>
        </authorList>
    </citation>
    <scope>FUNCTION IN RETROTRANSPOSITION</scope>
</reference>
<reference key="21">
    <citation type="journal article" date="2010" name="Nucleic Acids Res.">
        <title>Quantitative profiling of the full APOBEC3 mRNA repertoire in lymphocytes and tissues: implications for HIV-1 restriction.</title>
        <authorList>
            <person name="Refsland E.W."/>
            <person name="Stenglein M.D."/>
            <person name="Shindo K."/>
            <person name="Albin J.S."/>
            <person name="Brown W.L."/>
            <person name="Harris R.S."/>
        </authorList>
    </citation>
    <scope>TISSUE SPECIFICITY</scope>
</reference>
<reference key="22">
    <citation type="journal article" date="2011" name="Cell">
        <title>Hydroxylation of 5-methylcytosine by TET1 promotes active DNA demethylation in the adult brain.</title>
        <authorList>
            <person name="Guo J.U."/>
            <person name="Su Y."/>
            <person name="Zhong C."/>
            <person name="Ming G.L."/>
            <person name="Song H."/>
        </authorList>
    </citation>
    <scope>FUNCTION IN DNA DEMETHYLATION</scope>
</reference>
<reference key="23">
    <citation type="journal article" date="2011" name="J. Virol.">
        <title>Human and rhesus APOBEC3D, APOBEC3F, APOBEC3G, and APOBEC3H demonstrate a conserved capacity to restrict Vif-deficient HIV-1.</title>
        <authorList>
            <person name="Hultquist J.F."/>
            <person name="Lengyel J.A."/>
            <person name="Refsland E.W."/>
            <person name="LaRue R.S."/>
            <person name="Lackey L."/>
            <person name="Brown W.L."/>
            <person name="Harris R.S."/>
        </authorList>
    </citation>
    <scope>FUNCTION IN HIV-1 RESTRICTION</scope>
    <scope>SUBCELLULAR LOCATION</scope>
    <scope>ACTIVITY REGULATION (MICROBIAL INFECTION)</scope>
    <scope>UBIQUITINATION (MICROBIAL INFECTION)</scope>
    <scope>INTERACTION WITH HIV-1 VIF (MICROBIAL INFECTION)</scope>
</reference>
<reference key="24">
    <citation type="journal article" date="2011" name="Nature">
        <title>Vif hijacks CBF-beta to degrade APOBEC3G and promote HIV-1 infection.</title>
        <authorList>
            <person name="Jaeger S."/>
            <person name="Kim D.Y."/>
            <person name="Hultquist J.F."/>
            <person name="Shindo K."/>
            <person name="LaRue R.S."/>
            <person name="Kwon E."/>
            <person name="Li M."/>
            <person name="Anderson B.D."/>
            <person name="Yen L."/>
            <person name="Stanley D."/>
            <person name="Mahon C."/>
            <person name="Kane J."/>
            <person name="Franks-Skiba K."/>
            <person name="Cimermancic P."/>
            <person name="Burlingame A."/>
            <person name="Sali A."/>
            <person name="Craik C.S."/>
            <person name="Harris R.S."/>
            <person name="Gross J.D."/>
            <person name="Krogan N.J."/>
        </authorList>
    </citation>
    <scope>ACTIVITY REGULATION (MICROBIAL INFECTION)</scope>
    <scope>UBIQUITINATION (MICROBIAL INFECTION)</scope>
    <scope>INTERACTION WITH HIV-1 VIF (MICROBIAL INFECTION)</scope>
</reference>
<reference key="25">
    <citation type="journal article" date="2012" name="Front. Microbiol.">
        <title>Retroelements versus APOBEC3 family members: No great escape from the magnificent seven.</title>
        <authorList>
            <person name="Arias J.F."/>
            <person name="Koyama T."/>
            <person name="Kinomoto M."/>
            <person name="Tokunaga K."/>
        </authorList>
    </citation>
    <scope>REVIEW</scope>
</reference>
<reference key="26">
    <citation type="journal article" date="2012" name="J. Virol.">
        <title>HIV-1 replication and APOBEC3 antiviral activity are not regulated by P bodies.</title>
        <authorList>
            <person name="Phalora P.K."/>
            <person name="Sherer N.M."/>
            <person name="Wolinsky S.M."/>
            <person name="Swanson C.M."/>
            <person name="Malim M.H."/>
        </authorList>
    </citation>
    <scope>FUNCTION</scope>
    <scope>SUBCELLULAR LOCATION</scope>
    <scope>INTERACTION WITH AGO1; AGO2 AND AGO3</scope>
</reference>
<reference key="27">
    <citation type="journal article" date="2012" name="Nat. Struct. Mol. Biol.">
        <title>The APOBEC3C crystal structure and the interface for HIV-1 Vif binding.</title>
        <authorList>
            <person name="Kitamura S."/>
            <person name="Ode H."/>
            <person name="Nakashima M."/>
            <person name="Imahashi M."/>
            <person name="Naganawa Y."/>
            <person name="Kurosawa T."/>
            <person name="Yokomaku Y."/>
            <person name="Yamane T."/>
            <person name="Watanabe N."/>
            <person name="Suzuki A."/>
            <person name="Sugiura W."/>
            <person name="Iwatani Y."/>
        </authorList>
    </citation>
    <scope>FUNCTION IN HIV-1 INFECTIVITY</scope>
    <scope>INTERACTION WITH HIV-1 VIF (MICROBIAL INFECTION)</scope>
    <scope>MUTAGENESIS OF GLU-251; LEU-255; PHE-258; CYS-259; 262-ILE-LEU-263; SER-264; TYR-269; GLU-289; PHE-290; HIS-294 AND GLU-324</scope>
</reference>
<reference key="28">
    <citation type="journal article" date="2012" name="PLoS Pathog.">
        <title>Endogenous origins of HIV-1 G-to-A hypermutation and restriction in the nonpermissive T cell line CEM2n.</title>
        <authorList>
            <person name="Refsland E.W."/>
            <person name="Hultquist J.F."/>
            <person name="Harris R.S."/>
        </authorList>
    </citation>
    <scope>FUNCTION IN HIV-1 RESTRICTION</scope>
</reference>
<reference key="29">
    <citation type="journal article" date="2012" name="Semin. Cell Dev. Biol.">
        <title>Functions and regulation of the APOBEC family of proteins.</title>
        <authorList>
            <person name="Smith H.C."/>
            <person name="Bennett R.P."/>
            <person name="Kizilyer A."/>
            <person name="McDougall W.M."/>
            <person name="Prohaska K.M."/>
        </authorList>
    </citation>
    <scope>REVIEW</scope>
</reference>
<reference key="30">
    <citation type="journal article" date="2013" name="J. Mol. Biol.">
        <title>Dispersed sites of HIV Vif-dependent polyubiquitination in the DNA deaminase APOBEC3F.</title>
        <authorList>
            <person name="Albin J.S."/>
            <person name="Anderson J.S."/>
            <person name="Johnson J.R."/>
            <person name="Harjes E."/>
            <person name="Matsuo H."/>
            <person name="Krogan N.J."/>
            <person name="Harris R.S."/>
        </authorList>
    </citation>
    <scope>UBIQUITINATION AT LYS-52; LYS-234; LYS-334; LYS-352; LYS-355 AND LYS-358 (MICROBIAL INFECTION)</scope>
</reference>
<reference key="31">
    <citation type="journal article" date="2013" name="J. Virol.">
        <title>APOBEC3G restricts HIV-1 to a greater extent than APOBEC3F and APOBEC3DE in human primary CD4+ t cells and macrophages.</title>
        <authorList>
            <person name="Chaipan C."/>
            <person name="Smith J.L."/>
            <person name="Hu W.S."/>
            <person name="Pathak V.K."/>
        </authorList>
    </citation>
    <scope>FUNCTION IN HIV-1 RESTRICTION</scope>
</reference>
<reference key="32">
    <citation type="journal article" date="2013" name="J. Virol.">
        <title>The suppression of HIV-1 infection by APOBEC3 proteins in primary human CD4+ T cells is associated with the inhibition of processive reverse transcription as well as excessive cytidine deamination.</title>
        <authorList>
            <person name="Gillick K."/>
            <person name="Pollpeter D."/>
            <person name="Phalora P."/>
            <person name="Kim E.Y."/>
            <person name="Wolinsky S.M."/>
            <person name="Malim M.H."/>
        </authorList>
    </citation>
    <scope>FUNCTION IN HIV-1 RESTRICTION</scope>
</reference>
<reference key="33">
    <citation type="journal article" date="2022" name="J. Mol. Biol.">
        <title>Differential Activity of APOBEC3F, APOBEC3G, and APOBEC3H in the Restriction of HIV-2.</title>
        <authorList>
            <person name="Meissner M.E."/>
            <person name="Willkomm N.A."/>
            <person name="Lucas J."/>
            <person name="Arndt W.G."/>
            <person name="Aitken S.F."/>
            <person name="Julik E.J."/>
            <person name="Baliga S."/>
            <person name="Mansky L.M."/>
        </authorList>
    </citation>
    <scope>FUNCTION</scope>
</reference>
<reference evidence="35 36" key="34">
    <citation type="journal article" date="2016" name="J. Mol. Biol.">
        <title>1.92 Angstrom Zinc-Free APOBEC3F Catalytic Domain Crystal Structure.</title>
        <authorList>
            <person name="Shaban N.M."/>
            <person name="Shi K."/>
            <person name="Li M."/>
            <person name="Aihara H."/>
            <person name="Harris R.S."/>
        </authorList>
    </citation>
    <scope>X-RAY CRYSTALLOGRAPHY (1.92 ANGSTROMS) OF 185-373 IN COMPLEX WITH ZINC</scope>
    <scope>SUBUNIT</scope>
    <scope>COFACTOR</scope>
    <scope>DISULFIDE BOND</scope>
</reference>
<reference evidence="37" key="35">
    <citation type="journal article" date="2019" name="Nat. Struct. Mol. Biol.">
        <title>Structural basis of antagonism of human APOBEC3F by HIV-1 Vif.</title>
        <authorList>
            <person name="Hu Y."/>
            <person name="Desimmie B.A."/>
            <person name="Nguyen H.C."/>
            <person name="Ziegler S.J."/>
            <person name="Cheng T.C."/>
            <person name="Chen J."/>
            <person name="Wang J."/>
            <person name="Wang H."/>
            <person name="Zhang K."/>
            <person name="Pathak V.K."/>
            <person name="Xiong Y."/>
        </authorList>
    </citation>
    <scope>STRUCTURE BY ELECTRON MICROSCOPY (3.90 ANGSTROMS) OF 185-373 IN COMPLEX WITH CBFB; HIV-1 VIF AND ZINC</scope>
    <scope>SUBUNIT</scope>
    <scope>COFACTOR</scope>
    <scope>ACTIVE SITE</scope>
    <scope>ACTIVITY REGULATION (MICROBIAL INFECTION)</scope>
    <scope>UBIQUITINATION (MICROBIAL INFECTION)</scope>
    <scope>INTERACTION WITH HIV-1 VIF (MICROBIAL INFECTION)</scope>
    <scope>INTERACTION WITH APOBEC3G</scope>
    <scope>MUTAGENESIS OF 260-ASP-ASP-261; PRO-265; GLU-289; ARG-293; GLU-324 AND ASP-347</scope>
</reference>